<reference key="1">
    <citation type="submission" date="2006-04" db="EMBL/GenBank/DDBJ databases">
        <title>Complete sequence of chromosome of Deinococcus geothermalis DSM 11300.</title>
        <authorList>
            <person name="Copeland A."/>
            <person name="Lucas S."/>
            <person name="Lapidus A."/>
            <person name="Barry K."/>
            <person name="Detter J.C."/>
            <person name="Glavina del Rio T."/>
            <person name="Hammon N."/>
            <person name="Israni S."/>
            <person name="Dalin E."/>
            <person name="Tice H."/>
            <person name="Pitluck S."/>
            <person name="Brettin T."/>
            <person name="Bruce D."/>
            <person name="Han C."/>
            <person name="Tapia R."/>
            <person name="Saunders E."/>
            <person name="Gilna P."/>
            <person name="Schmutz J."/>
            <person name="Larimer F."/>
            <person name="Land M."/>
            <person name="Hauser L."/>
            <person name="Kyrpides N."/>
            <person name="Kim E."/>
            <person name="Daly M.J."/>
            <person name="Fredrickson J.K."/>
            <person name="Makarova K.S."/>
            <person name="Gaidamakova E.K."/>
            <person name="Zhai M."/>
            <person name="Richardson P."/>
        </authorList>
    </citation>
    <scope>NUCLEOTIDE SEQUENCE [LARGE SCALE GENOMIC DNA]</scope>
    <source>
        <strain>DSM 11300 / CIP 105573 / AG-3a</strain>
    </source>
</reference>
<proteinExistence type="inferred from homology"/>
<name>SYP_DEIGD</name>
<comment type="function">
    <text evidence="1">Catalyzes the attachment of proline to tRNA(Pro) in a two-step reaction: proline is first activated by ATP to form Pro-AMP and then transferred to the acceptor end of tRNA(Pro).</text>
</comment>
<comment type="catalytic activity">
    <reaction evidence="1">
        <text>tRNA(Pro) + L-proline + ATP = L-prolyl-tRNA(Pro) + AMP + diphosphate</text>
        <dbReference type="Rhea" id="RHEA:14305"/>
        <dbReference type="Rhea" id="RHEA-COMP:9700"/>
        <dbReference type="Rhea" id="RHEA-COMP:9702"/>
        <dbReference type="ChEBI" id="CHEBI:30616"/>
        <dbReference type="ChEBI" id="CHEBI:33019"/>
        <dbReference type="ChEBI" id="CHEBI:60039"/>
        <dbReference type="ChEBI" id="CHEBI:78442"/>
        <dbReference type="ChEBI" id="CHEBI:78532"/>
        <dbReference type="ChEBI" id="CHEBI:456215"/>
        <dbReference type="EC" id="6.1.1.15"/>
    </reaction>
</comment>
<comment type="subunit">
    <text evidence="1">Homodimer.</text>
</comment>
<comment type="subcellular location">
    <subcellularLocation>
        <location evidence="1">Cytoplasm</location>
    </subcellularLocation>
</comment>
<comment type="domain">
    <text evidence="1">Consists of three domains: the N-terminal catalytic domain, the anticodon-binding domain and the C-terminal extension.</text>
</comment>
<comment type="similarity">
    <text evidence="1">Belongs to the class-II aminoacyl-tRNA synthetase family. ProS type 3 subfamily.</text>
</comment>
<organism>
    <name type="scientific">Deinococcus geothermalis (strain DSM 11300 / CIP 105573 / AG-3a)</name>
    <dbReference type="NCBI Taxonomy" id="319795"/>
    <lineage>
        <taxon>Bacteria</taxon>
        <taxon>Thermotogati</taxon>
        <taxon>Deinococcota</taxon>
        <taxon>Deinococci</taxon>
        <taxon>Deinococcales</taxon>
        <taxon>Deinococcaceae</taxon>
        <taxon>Deinococcus</taxon>
    </lineage>
</organism>
<keyword id="KW-0030">Aminoacyl-tRNA synthetase</keyword>
<keyword id="KW-0067">ATP-binding</keyword>
<keyword id="KW-0963">Cytoplasm</keyword>
<keyword id="KW-0436">Ligase</keyword>
<keyword id="KW-0547">Nucleotide-binding</keyword>
<keyword id="KW-0648">Protein biosynthesis</keyword>
<accession>Q1J0W2</accession>
<feature type="chain" id="PRO_0000249128" description="Proline--tRNA ligase">
    <location>
        <begin position="1"/>
        <end position="497"/>
    </location>
</feature>
<gene>
    <name evidence="1" type="primary">proS</name>
    <name type="ordered locus">Dgeo_0570</name>
</gene>
<dbReference type="EC" id="6.1.1.15" evidence="1"/>
<dbReference type="EMBL" id="CP000359">
    <property type="protein sequence ID" value="ABF44872.1"/>
    <property type="molecule type" value="Genomic_DNA"/>
</dbReference>
<dbReference type="SMR" id="Q1J0W2"/>
<dbReference type="STRING" id="319795.Dgeo_0570"/>
<dbReference type="KEGG" id="dge:Dgeo_0570"/>
<dbReference type="eggNOG" id="COG0442">
    <property type="taxonomic scope" value="Bacteria"/>
</dbReference>
<dbReference type="HOGENOM" id="CLU_001882_4_2_0"/>
<dbReference type="Proteomes" id="UP000002431">
    <property type="component" value="Chromosome"/>
</dbReference>
<dbReference type="GO" id="GO:0017101">
    <property type="term" value="C:aminoacyl-tRNA synthetase multienzyme complex"/>
    <property type="evidence" value="ECO:0007669"/>
    <property type="project" value="TreeGrafter"/>
</dbReference>
<dbReference type="GO" id="GO:0005737">
    <property type="term" value="C:cytoplasm"/>
    <property type="evidence" value="ECO:0007669"/>
    <property type="project" value="UniProtKB-SubCell"/>
</dbReference>
<dbReference type="GO" id="GO:0005524">
    <property type="term" value="F:ATP binding"/>
    <property type="evidence" value="ECO:0007669"/>
    <property type="project" value="UniProtKB-UniRule"/>
</dbReference>
<dbReference type="GO" id="GO:0004827">
    <property type="term" value="F:proline-tRNA ligase activity"/>
    <property type="evidence" value="ECO:0007669"/>
    <property type="project" value="UniProtKB-UniRule"/>
</dbReference>
<dbReference type="GO" id="GO:0006433">
    <property type="term" value="P:prolyl-tRNA aminoacylation"/>
    <property type="evidence" value="ECO:0007669"/>
    <property type="project" value="UniProtKB-UniRule"/>
</dbReference>
<dbReference type="CDD" id="cd00862">
    <property type="entry name" value="ProRS_anticodon_zinc"/>
    <property type="match status" value="1"/>
</dbReference>
<dbReference type="CDD" id="cd00778">
    <property type="entry name" value="ProRS_core_arch_euk"/>
    <property type="match status" value="1"/>
</dbReference>
<dbReference type="FunFam" id="3.40.50.800:FF:000005">
    <property type="entry name" value="bifunctional glutamate/proline--tRNA ligase"/>
    <property type="match status" value="1"/>
</dbReference>
<dbReference type="FunFam" id="3.30.930.10:FF:000023">
    <property type="entry name" value="Proline--tRNA ligase"/>
    <property type="match status" value="1"/>
</dbReference>
<dbReference type="Gene3D" id="3.40.50.800">
    <property type="entry name" value="Anticodon-binding domain"/>
    <property type="match status" value="1"/>
</dbReference>
<dbReference type="Gene3D" id="3.30.930.10">
    <property type="entry name" value="Bira Bifunctional Protein, Domain 2"/>
    <property type="match status" value="1"/>
</dbReference>
<dbReference type="Gene3D" id="3.30.110.30">
    <property type="entry name" value="C-terminal domain of ProRS"/>
    <property type="match status" value="1"/>
</dbReference>
<dbReference type="HAMAP" id="MF_01571">
    <property type="entry name" value="Pro_tRNA_synth_type3"/>
    <property type="match status" value="1"/>
</dbReference>
<dbReference type="InterPro" id="IPR002314">
    <property type="entry name" value="aa-tRNA-synt_IIb"/>
</dbReference>
<dbReference type="InterPro" id="IPR006195">
    <property type="entry name" value="aa-tRNA-synth_II"/>
</dbReference>
<dbReference type="InterPro" id="IPR045864">
    <property type="entry name" value="aa-tRNA-synth_II/BPL/LPL"/>
</dbReference>
<dbReference type="InterPro" id="IPR004154">
    <property type="entry name" value="Anticodon-bd"/>
</dbReference>
<dbReference type="InterPro" id="IPR036621">
    <property type="entry name" value="Anticodon-bd_dom_sf"/>
</dbReference>
<dbReference type="InterPro" id="IPR002316">
    <property type="entry name" value="Pro-tRNA-ligase_IIa"/>
</dbReference>
<dbReference type="InterPro" id="IPR004499">
    <property type="entry name" value="Pro-tRNA-ligase_IIa_arc-type"/>
</dbReference>
<dbReference type="InterPro" id="IPR016061">
    <property type="entry name" value="Pro-tRNA_ligase_II_C"/>
</dbReference>
<dbReference type="InterPro" id="IPR017449">
    <property type="entry name" value="Pro-tRNA_synth_II"/>
</dbReference>
<dbReference type="InterPro" id="IPR033721">
    <property type="entry name" value="ProRS_core_arch_euk"/>
</dbReference>
<dbReference type="NCBIfam" id="TIGR00408">
    <property type="entry name" value="proS_fam_I"/>
    <property type="match status" value="1"/>
</dbReference>
<dbReference type="PANTHER" id="PTHR43382:SF2">
    <property type="entry name" value="BIFUNCTIONAL GLUTAMATE_PROLINE--TRNA LIGASE"/>
    <property type="match status" value="1"/>
</dbReference>
<dbReference type="PANTHER" id="PTHR43382">
    <property type="entry name" value="PROLYL-TRNA SYNTHETASE"/>
    <property type="match status" value="1"/>
</dbReference>
<dbReference type="Pfam" id="PF03129">
    <property type="entry name" value="HGTP_anticodon"/>
    <property type="match status" value="1"/>
</dbReference>
<dbReference type="Pfam" id="PF09180">
    <property type="entry name" value="ProRS-C_1"/>
    <property type="match status" value="1"/>
</dbReference>
<dbReference type="Pfam" id="PF00587">
    <property type="entry name" value="tRNA-synt_2b"/>
    <property type="match status" value="1"/>
</dbReference>
<dbReference type="PRINTS" id="PR01046">
    <property type="entry name" value="TRNASYNTHPRO"/>
</dbReference>
<dbReference type="SMART" id="SM00946">
    <property type="entry name" value="ProRS-C_1"/>
    <property type="match status" value="1"/>
</dbReference>
<dbReference type="SUPFAM" id="SSF64586">
    <property type="entry name" value="C-terminal domain of ProRS"/>
    <property type="match status" value="1"/>
</dbReference>
<dbReference type="SUPFAM" id="SSF52954">
    <property type="entry name" value="Class II aaRS ABD-related"/>
    <property type="match status" value="1"/>
</dbReference>
<dbReference type="SUPFAM" id="SSF55681">
    <property type="entry name" value="Class II aaRS and biotin synthetases"/>
    <property type="match status" value="1"/>
</dbReference>
<dbReference type="PROSITE" id="PS50862">
    <property type="entry name" value="AA_TRNA_LIGASE_II"/>
    <property type="match status" value="1"/>
</dbReference>
<sequence>MPPMTKAEGKQDKKAQQYGVTPQSVDFNDWYNEVVKKADLADNSPVAGAMVVKPYGTALWENIQRWLDDRFKATGHESLIFPTLIPMNFITKEADHVEGFAPELFTVDRIGTEQLTEPYVLRPTSETIIGYMWSGWLNSYRDLPFLHYQWGSVFRAELRTKAFLRTSEFYWHEGHTAHASEEEARREVRQILDLYHEFCRDILALPVVRGEKTASERFAGAVATYSIEGMMRDGKALQSGTSHYLGQNFSKAFDVKFQTREQREEYAYTTSWAISSRIIGAIIMTHGDDFGLIMPPRIAPIQVVVIPVSRKENFDQMVAEGEKLAHELRAQGLRVKVDRREGVTNGFKYNDWELKGVPVRIELGPRDLEQGVVVVKNRNAEEKETLPREEAIRGMANRLDSIHNWLLQRATDFLLTHTVPADSYEELKNAIEHGNWVRAFHCGNAECEAQIKEDTKATTRNIPLDDAEFFNEREEGVCVKCGQPSAYGKRVIFGRQY</sequence>
<protein>
    <recommendedName>
        <fullName evidence="1">Proline--tRNA ligase</fullName>
        <ecNumber evidence="1">6.1.1.15</ecNumber>
    </recommendedName>
    <alternativeName>
        <fullName evidence="1">Prolyl-tRNA synthetase</fullName>
        <shortName evidence="1">ProRS</shortName>
    </alternativeName>
</protein>
<evidence type="ECO:0000255" key="1">
    <source>
        <dbReference type="HAMAP-Rule" id="MF_01571"/>
    </source>
</evidence>